<proteinExistence type="predicted"/>
<sequence length="346" mass="37206">MAGVSEAERRGHRKLVRFQARRAIGPIRPTSAAWDRDFDPAGKRIAVVGTDAAAAHYISRLSESAASVTVFTQAPRRVVTGVPLWTTRAKRWLRRRTGAEHPAVAWATAAIDALTSSGIRTSDGVEHPVDAIIYGTGFAIADQVGDQTLVGAGGVTIRQAWDDGMEPYLGVAVHGFPNYFFITGPDTAAQARCVVECMKLMERTASRRIEVRRSSQQVFNERAQLKPAQPHRQTGGLEAFDLSSAATEDDQTYDGAATLTLAGARFRVRVRLTGHLDPIDGNYHWQGTVFDSLPETSLTHARAATLTIGGRSAPARITEQTPWGTHSVAGVGPPPYARSGPASATT</sequence>
<protein>
    <recommendedName>
        <fullName>Uncharacterized protein MT0969</fullName>
    </recommendedName>
</protein>
<evidence type="ECO:0000256" key="1">
    <source>
        <dbReference type="SAM" id="MobiDB-lite"/>
    </source>
</evidence>
<evidence type="ECO:0000305" key="2"/>
<feature type="chain" id="PRO_0000427622" description="Uncharacterized protein MT0969">
    <location>
        <begin position="1"/>
        <end position="346"/>
    </location>
</feature>
<feature type="region of interest" description="Disordered" evidence="1">
    <location>
        <begin position="321"/>
        <end position="346"/>
    </location>
</feature>
<dbReference type="EMBL" id="AE000516">
    <property type="protein sequence ID" value="AAK45217.1"/>
    <property type="status" value="ALT_INIT"/>
    <property type="molecule type" value="Genomic_DNA"/>
</dbReference>
<dbReference type="PIR" id="E70715">
    <property type="entry name" value="E70715"/>
</dbReference>
<dbReference type="RefSeq" id="WP_003898656.1">
    <property type="nucleotide sequence ID" value="NZ_KK341227.1"/>
</dbReference>
<dbReference type="SMR" id="P9WKN6"/>
<dbReference type="KEGG" id="mtc:MT0969"/>
<dbReference type="PATRIC" id="fig|83331.31.peg.1040"/>
<dbReference type="HOGENOM" id="CLU_057099_0_0_11"/>
<dbReference type="Proteomes" id="UP000001020">
    <property type="component" value="Chromosome"/>
</dbReference>
<dbReference type="Gene3D" id="3.50.50.60">
    <property type="entry name" value="FAD/NAD(P)-binding domain"/>
    <property type="match status" value="1"/>
</dbReference>
<dbReference type="InterPro" id="IPR032371">
    <property type="entry name" value="DUF4873"/>
</dbReference>
<dbReference type="InterPro" id="IPR051209">
    <property type="entry name" value="FAD-bind_Monooxygenase_sf"/>
</dbReference>
<dbReference type="InterPro" id="IPR036188">
    <property type="entry name" value="FAD/NAD-bd_sf"/>
</dbReference>
<dbReference type="PANTHER" id="PTHR42877:SF4">
    <property type="entry name" value="FAD_NAD(P)-BINDING DOMAIN-CONTAINING PROTEIN-RELATED"/>
    <property type="match status" value="1"/>
</dbReference>
<dbReference type="PANTHER" id="PTHR42877">
    <property type="entry name" value="L-ORNITHINE N(5)-MONOOXYGENASE-RELATED"/>
    <property type="match status" value="1"/>
</dbReference>
<dbReference type="Pfam" id="PF16170">
    <property type="entry name" value="DUF4873"/>
    <property type="match status" value="1"/>
</dbReference>
<dbReference type="SUPFAM" id="SSF51905">
    <property type="entry name" value="FAD/NAD(P)-binding domain"/>
    <property type="match status" value="2"/>
</dbReference>
<reference key="1">
    <citation type="journal article" date="2002" name="J. Bacteriol.">
        <title>Whole-genome comparison of Mycobacterium tuberculosis clinical and laboratory strains.</title>
        <authorList>
            <person name="Fleischmann R.D."/>
            <person name="Alland D."/>
            <person name="Eisen J.A."/>
            <person name="Carpenter L."/>
            <person name="White O."/>
            <person name="Peterson J.D."/>
            <person name="DeBoy R.T."/>
            <person name="Dodson R.J."/>
            <person name="Gwinn M.L."/>
            <person name="Haft D.H."/>
            <person name="Hickey E.K."/>
            <person name="Kolonay J.F."/>
            <person name="Nelson W.C."/>
            <person name="Umayam L.A."/>
            <person name="Ermolaeva M.D."/>
            <person name="Salzberg S.L."/>
            <person name="Delcher A."/>
            <person name="Utterback T.R."/>
            <person name="Weidman J.F."/>
            <person name="Khouri H.M."/>
            <person name="Gill J."/>
            <person name="Mikula A."/>
            <person name="Bishai W."/>
            <person name="Jacobs W.R. Jr."/>
            <person name="Venter J.C."/>
            <person name="Fraser C.M."/>
        </authorList>
    </citation>
    <scope>NUCLEOTIDE SEQUENCE [LARGE SCALE GENOMIC DNA]</scope>
    <source>
        <strain>CDC 1551 / Oshkosh</strain>
    </source>
</reference>
<keyword id="KW-1185">Reference proteome</keyword>
<organism>
    <name type="scientific">Mycobacterium tuberculosis (strain CDC 1551 / Oshkosh)</name>
    <dbReference type="NCBI Taxonomy" id="83331"/>
    <lineage>
        <taxon>Bacteria</taxon>
        <taxon>Bacillati</taxon>
        <taxon>Actinomycetota</taxon>
        <taxon>Actinomycetes</taxon>
        <taxon>Mycobacteriales</taxon>
        <taxon>Mycobacteriaceae</taxon>
        <taxon>Mycobacterium</taxon>
        <taxon>Mycobacterium tuberculosis complex</taxon>
    </lineage>
</organism>
<name>Y943_MYCTO</name>
<accession>P9WKN6</accession>
<accession>L0T5D1</accession>
<accession>P64765</accession>
<accession>P71566</accession>
<gene>
    <name type="ordered locus">MT0969</name>
</gene>
<comment type="sequence caution" evidence="2">
    <conflict type="erroneous initiation">
        <sequence resource="EMBL-CDS" id="AAK45217"/>
    </conflict>
</comment>